<feature type="chain" id="PRO_0000388900" description="UPF0756 membrane protein lin1603">
    <location>
        <begin position="1"/>
        <end position="153"/>
    </location>
</feature>
<feature type="transmembrane region" description="Helical" evidence="1">
    <location>
        <begin position="6"/>
        <end position="26"/>
    </location>
</feature>
<feature type="transmembrane region" description="Helical" evidence="1">
    <location>
        <begin position="54"/>
        <end position="74"/>
    </location>
</feature>
<feature type="transmembrane region" description="Helical" evidence="1">
    <location>
        <begin position="80"/>
        <end position="100"/>
    </location>
</feature>
<feature type="transmembrane region" description="Helical" evidence="1">
    <location>
        <begin position="117"/>
        <end position="137"/>
    </location>
</feature>
<accession>Q92BE7</accession>
<organism>
    <name type="scientific">Listeria innocua serovar 6a (strain ATCC BAA-680 / CLIP 11262)</name>
    <dbReference type="NCBI Taxonomy" id="272626"/>
    <lineage>
        <taxon>Bacteria</taxon>
        <taxon>Bacillati</taxon>
        <taxon>Bacillota</taxon>
        <taxon>Bacilli</taxon>
        <taxon>Bacillales</taxon>
        <taxon>Listeriaceae</taxon>
        <taxon>Listeria</taxon>
    </lineage>
</organism>
<protein>
    <recommendedName>
        <fullName evidence="1">UPF0756 membrane protein lin1603</fullName>
    </recommendedName>
</protein>
<comment type="subcellular location">
    <subcellularLocation>
        <location evidence="1">Cell membrane</location>
        <topology evidence="1">Multi-pass membrane protein</topology>
    </subcellularLocation>
</comment>
<comment type="similarity">
    <text evidence="1">Belongs to the UPF0756 family.</text>
</comment>
<sequence length="153" mass="16014">MFTESMLFLLLFLLLGLIAKNNSLIIAVAVVILLKLFHVDGKAMELIQAKGINWGVTIITVAILIPIATGQIGFKDLIDSFKSAAGWIGLGAGIAVSILAKKGVGYMAVDPQVTVSLVFGTILAVVLFRGIAAGPVIAAGIAYMAMQLVAFIK</sequence>
<keyword id="KW-1003">Cell membrane</keyword>
<keyword id="KW-0472">Membrane</keyword>
<keyword id="KW-0812">Transmembrane</keyword>
<keyword id="KW-1133">Transmembrane helix</keyword>
<reference key="1">
    <citation type="journal article" date="2001" name="Science">
        <title>Comparative genomics of Listeria species.</title>
        <authorList>
            <person name="Glaser P."/>
            <person name="Frangeul L."/>
            <person name="Buchrieser C."/>
            <person name="Rusniok C."/>
            <person name="Amend A."/>
            <person name="Baquero F."/>
            <person name="Berche P."/>
            <person name="Bloecker H."/>
            <person name="Brandt P."/>
            <person name="Chakraborty T."/>
            <person name="Charbit A."/>
            <person name="Chetouani F."/>
            <person name="Couve E."/>
            <person name="de Daruvar A."/>
            <person name="Dehoux P."/>
            <person name="Domann E."/>
            <person name="Dominguez-Bernal G."/>
            <person name="Duchaud E."/>
            <person name="Durant L."/>
            <person name="Dussurget O."/>
            <person name="Entian K.-D."/>
            <person name="Fsihi H."/>
            <person name="Garcia-del Portillo F."/>
            <person name="Garrido P."/>
            <person name="Gautier L."/>
            <person name="Goebel W."/>
            <person name="Gomez-Lopez N."/>
            <person name="Hain T."/>
            <person name="Hauf J."/>
            <person name="Jackson D."/>
            <person name="Jones L.-M."/>
            <person name="Kaerst U."/>
            <person name="Kreft J."/>
            <person name="Kuhn M."/>
            <person name="Kunst F."/>
            <person name="Kurapkat G."/>
            <person name="Madueno E."/>
            <person name="Maitournam A."/>
            <person name="Mata Vicente J."/>
            <person name="Ng E."/>
            <person name="Nedjari H."/>
            <person name="Nordsiek G."/>
            <person name="Novella S."/>
            <person name="de Pablos B."/>
            <person name="Perez-Diaz J.-C."/>
            <person name="Purcell R."/>
            <person name="Remmel B."/>
            <person name="Rose M."/>
            <person name="Schlueter T."/>
            <person name="Simoes N."/>
            <person name="Tierrez A."/>
            <person name="Vazquez-Boland J.-A."/>
            <person name="Voss H."/>
            <person name="Wehland J."/>
            <person name="Cossart P."/>
        </authorList>
    </citation>
    <scope>NUCLEOTIDE SEQUENCE [LARGE SCALE GENOMIC DNA]</scope>
    <source>
        <strain>ATCC BAA-680 / CLIP 11262</strain>
    </source>
</reference>
<dbReference type="EMBL" id="AL596169">
    <property type="protein sequence ID" value="CAC96834.1"/>
    <property type="molecule type" value="Genomic_DNA"/>
</dbReference>
<dbReference type="PIR" id="AB1633">
    <property type="entry name" value="AB1633"/>
</dbReference>
<dbReference type="RefSeq" id="WP_003762446.1">
    <property type="nucleotide sequence ID" value="NC_003212.1"/>
</dbReference>
<dbReference type="STRING" id="272626.gene:17565934"/>
<dbReference type="GeneID" id="93234985"/>
<dbReference type="KEGG" id="lin:lin1603"/>
<dbReference type="eggNOG" id="COG2707">
    <property type="taxonomic scope" value="Bacteria"/>
</dbReference>
<dbReference type="HOGENOM" id="CLU_125889_1_0_9"/>
<dbReference type="OrthoDB" id="80306at2"/>
<dbReference type="Proteomes" id="UP000002513">
    <property type="component" value="Chromosome"/>
</dbReference>
<dbReference type="GO" id="GO:0005886">
    <property type="term" value="C:plasma membrane"/>
    <property type="evidence" value="ECO:0007669"/>
    <property type="project" value="UniProtKB-SubCell"/>
</dbReference>
<dbReference type="HAMAP" id="MF_01874">
    <property type="entry name" value="UPF0756"/>
    <property type="match status" value="1"/>
</dbReference>
<dbReference type="InterPro" id="IPR007382">
    <property type="entry name" value="UPF0756_TM"/>
</dbReference>
<dbReference type="PANTHER" id="PTHR38452">
    <property type="entry name" value="UPF0756 MEMBRANE PROTEIN YEAL"/>
    <property type="match status" value="1"/>
</dbReference>
<dbReference type="PANTHER" id="PTHR38452:SF1">
    <property type="entry name" value="UPF0756 MEMBRANE PROTEIN YEAL"/>
    <property type="match status" value="1"/>
</dbReference>
<dbReference type="Pfam" id="PF04284">
    <property type="entry name" value="DUF441"/>
    <property type="match status" value="1"/>
</dbReference>
<proteinExistence type="inferred from homology"/>
<evidence type="ECO:0000255" key="1">
    <source>
        <dbReference type="HAMAP-Rule" id="MF_01874"/>
    </source>
</evidence>
<gene>
    <name type="ordered locus">lin1603</name>
</gene>
<name>Y1603_LISIN</name>